<gene>
    <name evidence="1" type="primary">ilvD</name>
    <name type="ordered locus">USA300HOU_2048</name>
</gene>
<proteinExistence type="inferred from homology"/>
<keyword id="KW-0001">2Fe-2S</keyword>
<keyword id="KW-0028">Amino-acid biosynthesis</keyword>
<keyword id="KW-0100">Branched-chain amino acid biosynthesis</keyword>
<keyword id="KW-0408">Iron</keyword>
<keyword id="KW-0411">Iron-sulfur</keyword>
<keyword id="KW-0456">Lyase</keyword>
<keyword id="KW-0460">Magnesium</keyword>
<keyword id="KW-0479">Metal-binding</keyword>
<reference key="1">
    <citation type="journal article" date="2007" name="BMC Microbiol.">
        <title>Subtle genetic changes enhance virulence of methicillin resistant and sensitive Staphylococcus aureus.</title>
        <authorList>
            <person name="Highlander S.K."/>
            <person name="Hulten K.G."/>
            <person name="Qin X."/>
            <person name="Jiang H."/>
            <person name="Yerrapragada S."/>
            <person name="Mason E.O. Jr."/>
            <person name="Shang Y."/>
            <person name="Williams T.M."/>
            <person name="Fortunov R.M."/>
            <person name="Liu Y."/>
            <person name="Igboeli O."/>
            <person name="Petrosino J."/>
            <person name="Tirumalai M."/>
            <person name="Uzman A."/>
            <person name="Fox G.E."/>
            <person name="Cardenas A.M."/>
            <person name="Muzny D.M."/>
            <person name="Hemphill L."/>
            <person name="Ding Y."/>
            <person name="Dugan S."/>
            <person name="Blyth P.R."/>
            <person name="Buhay C.J."/>
            <person name="Dinh H.H."/>
            <person name="Hawes A.C."/>
            <person name="Holder M."/>
            <person name="Kovar C.L."/>
            <person name="Lee S.L."/>
            <person name="Liu W."/>
            <person name="Nazareth L.V."/>
            <person name="Wang Q."/>
            <person name="Zhou J."/>
            <person name="Kaplan S.L."/>
            <person name="Weinstock G.M."/>
        </authorList>
    </citation>
    <scope>NUCLEOTIDE SEQUENCE [LARGE SCALE GENOMIC DNA]</scope>
    <source>
        <strain>USA300 / TCH1516</strain>
    </source>
</reference>
<protein>
    <recommendedName>
        <fullName evidence="1">Dihydroxy-acid dehydratase</fullName>
        <shortName evidence="1">DAD</shortName>
        <ecNumber evidence="1">4.2.1.9</ecNumber>
    </recommendedName>
</protein>
<evidence type="ECO:0000255" key="1">
    <source>
        <dbReference type="HAMAP-Rule" id="MF_00012"/>
    </source>
</evidence>
<name>ILVD_STAAT</name>
<comment type="function">
    <text evidence="1">Functions in the biosynthesis of branched-chain amino acids. Catalyzes the dehydration of (2R,3R)-2,3-dihydroxy-3-methylpentanoate (2,3-dihydroxy-3-methylvalerate) into 2-oxo-3-methylpentanoate (2-oxo-3-methylvalerate) and of (2R)-2,3-dihydroxy-3-methylbutanoate (2,3-dihydroxyisovalerate) into 2-oxo-3-methylbutanoate (2-oxoisovalerate), the penultimate precursor to L-isoleucine and L-valine, respectively.</text>
</comment>
<comment type="catalytic activity">
    <reaction evidence="1">
        <text>(2R)-2,3-dihydroxy-3-methylbutanoate = 3-methyl-2-oxobutanoate + H2O</text>
        <dbReference type="Rhea" id="RHEA:24809"/>
        <dbReference type="ChEBI" id="CHEBI:11851"/>
        <dbReference type="ChEBI" id="CHEBI:15377"/>
        <dbReference type="ChEBI" id="CHEBI:49072"/>
        <dbReference type="EC" id="4.2.1.9"/>
    </reaction>
    <physiologicalReaction direction="left-to-right" evidence="1">
        <dbReference type="Rhea" id="RHEA:24810"/>
    </physiologicalReaction>
</comment>
<comment type="catalytic activity">
    <reaction evidence="1">
        <text>(2R,3R)-2,3-dihydroxy-3-methylpentanoate = (S)-3-methyl-2-oxopentanoate + H2O</text>
        <dbReference type="Rhea" id="RHEA:27694"/>
        <dbReference type="ChEBI" id="CHEBI:15377"/>
        <dbReference type="ChEBI" id="CHEBI:35146"/>
        <dbReference type="ChEBI" id="CHEBI:49258"/>
        <dbReference type="EC" id="4.2.1.9"/>
    </reaction>
    <physiologicalReaction direction="left-to-right" evidence="1">
        <dbReference type="Rhea" id="RHEA:27695"/>
    </physiologicalReaction>
</comment>
<comment type="cofactor">
    <cofactor evidence="1">
        <name>[2Fe-2S] cluster</name>
        <dbReference type="ChEBI" id="CHEBI:190135"/>
    </cofactor>
    <text evidence="1">Binds 1 [2Fe-2S] cluster per subunit. This cluster acts as a Lewis acid cofactor.</text>
</comment>
<comment type="cofactor">
    <cofactor evidence="1">
        <name>Mg(2+)</name>
        <dbReference type="ChEBI" id="CHEBI:18420"/>
    </cofactor>
</comment>
<comment type="pathway">
    <text evidence="1">Amino-acid biosynthesis; L-isoleucine biosynthesis; L-isoleucine from 2-oxobutanoate: step 3/4.</text>
</comment>
<comment type="pathway">
    <text evidence="1">Amino-acid biosynthesis; L-valine biosynthesis; L-valine from pyruvate: step 3/4.</text>
</comment>
<comment type="subunit">
    <text evidence="1">Homodimer.</text>
</comment>
<comment type="similarity">
    <text evidence="1">Belongs to the IlvD/Edd family.</text>
</comment>
<dbReference type="EC" id="4.2.1.9" evidence="1"/>
<dbReference type="EMBL" id="CP000730">
    <property type="protein sequence ID" value="ABX30045.1"/>
    <property type="molecule type" value="Genomic_DNA"/>
</dbReference>
<dbReference type="RefSeq" id="WP_001255791.1">
    <property type="nucleotide sequence ID" value="NC_010079.1"/>
</dbReference>
<dbReference type="SMR" id="A8Z4V6"/>
<dbReference type="KEGG" id="sax:USA300HOU_2048"/>
<dbReference type="HOGENOM" id="CLU_014271_4_2_9"/>
<dbReference type="UniPathway" id="UPA00047">
    <property type="reaction ID" value="UER00057"/>
</dbReference>
<dbReference type="UniPathway" id="UPA00049">
    <property type="reaction ID" value="UER00061"/>
</dbReference>
<dbReference type="GO" id="GO:0005829">
    <property type="term" value="C:cytosol"/>
    <property type="evidence" value="ECO:0007669"/>
    <property type="project" value="TreeGrafter"/>
</dbReference>
<dbReference type="GO" id="GO:0051537">
    <property type="term" value="F:2 iron, 2 sulfur cluster binding"/>
    <property type="evidence" value="ECO:0007669"/>
    <property type="project" value="UniProtKB-UniRule"/>
</dbReference>
<dbReference type="GO" id="GO:0004160">
    <property type="term" value="F:dihydroxy-acid dehydratase activity"/>
    <property type="evidence" value="ECO:0007669"/>
    <property type="project" value="UniProtKB-UniRule"/>
</dbReference>
<dbReference type="GO" id="GO:0000287">
    <property type="term" value="F:magnesium ion binding"/>
    <property type="evidence" value="ECO:0007669"/>
    <property type="project" value="UniProtKB-UniRule"/>
</dbReference>
<dbReference type="GO" id="GO:0009097">
    <property type="term" value="P:isoleucine biosynthetic process"/>
    <property type="evidence" value="ECO:0007669"/>
    <property type="project" value="UniProtKB-UniRule"/>
</dbReference>
<dbReference type="GO" id="GO:0009099">
    <property type="term" value="P:L-valine biosynthetic process"/>
    <property type="evidence" value="ECO:0007669"/>
    <property type="project" value="UniProtKB-UniRule"/>
</dbReference>
<dbReference type="FunFam" id="3.50.30.80:FF:000001">
    <property type="entry name" value="Dihydroxy-acid dehydratase"/>
    <property type="match status" value="1"/>
</dbReference>
<dbReference type="Gene3D" id="3.50.30.80">
    <property type="entry name" value="IlvD/EDD C-terminal domain-like"/>
    <property type="match status" value="1"/>
</dbReference>
<dbReference type="HAMAP" id="MF_00012">
    <property type="entry name" value="IlvD"/>
    <property type="match status" value="1"/>
</dbReference>
<dbReference type="InterPro" id="IPR042096">
    <property type="entry name" value="Dihydro-acid_dehy_C"/>
</dbReference>
<dbReference type="InterPro" id="IPR004404">
    <property type="entry name" value="DihydroxyA_deHydtase"/>
</dbReference>
<dbReference type="InterPro" id="IPR020558">
    <property type="entry name" value="DiOHA_6PGluconate_deHydtase_CS"/>
</dbReference>
<dbReference type="InterPro" id="IPR056740">
    <property type="entry name" value="ILV_EDD_C"/>
</dbReference>
<dbReference type="InterPro" id="IPR000581">
    <property type="entry name" value="ILV_EDD_N"/>
</dbReference>
<dbReference type="InterPro" id="IPR037237">
    <property type="entry name" value="IlvD/EDD_N"/>
</dbReference>
<dbReference type="NCBIfam" id="TIGR00110">
    <property type="entry name" value="ilvD"/>
    <property type="match status" value="1"/>
</dbReference>
<dbReference type="NCBIfam" id="NF002068">
    <property type="entry name" value="PRK00911.1"/>
    <property type="match status" value="1"/>
</dbReference>
<dbReference type="PANTHER" id="PTHR43661">
    <property type="entry name" value="D-XYLONATE DEHYDRATASE"/>
    <property type="match status" value="1"/>
</dbReference>
<dbReference type="PANTHER" id="PTHR43661:SF3">
    <property type="entry name" value="D-XYLONATE DEHYDRATASE YAGF-RELATED"/>
    <property type="match status" value="1"/>
</dbReference>
<dbReference type="Pfam" id="PF24877">
    <property type="entry name" value="ILV_EDD_C"/>
    <property type="match status" value="1"/>
</dbReference>
<dbReference type="Pfam" id="PF00920">
    <property type="entry name" value="ILVD_EDD_N"/>
    <property type="match status" value="1"/>
</dbReference>
<dbReference type="SUPFAM" id="SSF143975">
    <property type="entry name" value="IlvD/EDD N-terminal domain-like"/>
    <property type="match status" value="1"/>
</dbReference>
<dbReference type="SUPFAM" id="SSF52016">
    <property type="entry name" value="LeuD/IlvD-like"/>
    <property type="match status" value="1"/>
</dbReference>
<dbReference type="PROSITE" id="PS00886">
    <property type="entry name" value="ILVD_EDD_1"/>
    <property type="match status" value="1"/>
</dbReference>
<dbReference type="PROSITE" id="PS00887">
    <property type="entry name" value="ILVD_EDD_2"/>
    <property type="match status" value="1"/>
</dbReference>
<feature type="chain" id="PRO_1000073994" description="Dihydroxy-acid dehydratase">
    <location>
        <begin position="1"/>
        <end position="562"/>
    </location>
</feature>
<feature type="active site" description="Proton acceptor" evidence="1">
    <location>
        <position position="472"/>
    </location>
</feature>
<feature type="binding site" evidence="1">
    <location>
        <position position="80"/>
    </location>
    <ligand>
        <name>Mg(2+)</name>
        <dbReference type="ChEBI" id="CHEBI:18420"/>
    </ligand>
</feature>
<feature type="binding site" evidence="1">
    <location>
        <position position="121"/>
    </location>
    <ligand>
        <name>[2Fe-2S] cluster</name>
        <dbReference type="ChEBI" id="CHEBI:190135"/>
    </ligand>
</feature>
<feature type="binding site" evidence="1">
    <location>
        <position position="122"/>
    </location>
    <ligand>
        <name>Mg(2+)</name>
        <dbReference type="ChEBI" id="CHEBI:18420"/>
    </ligand>
</feature>
<feature type="binding site" description="via carbamate group" evidence="1">
    <location>
        <position position="123"/>
    </location>
    <ligand>
        <name>Mg(2+)</name>
        <dbReference type="ChEBI" id="CHEBI:18420"/>
    </ligand>
</feature>
<feature type="binding site" evidence="1">
    <location>
        <position position="194"/>
    </location>
    <ligand>
        <name>[2Fe-2S] cluster</name>
        <dbReference type="ChEBI" id="CHEBI:190135"/>
    </ligand>
</feature>
<feature type="binding site" evidence="1">
    <location>
        <position position="446"/>
    </location>
    <ligand>
        <name>Mg(2+)</name>
        <dbReference type="ChEBI" id="CHEBI:18420"/>
    </ligand>
</feature>
<feature type="modified residue" description="N6-carboxylysine" evidence="1">
    <location>
        <position position="123"/>
    </location>
</feature>
<sequence length="562" mass="60052">MRSDMIKKGDHQAPARSLLHATGALKSPTDMNKPFVAICNSYIDIVPGHVHLRELADIAKEAIREAGAIPFEFNTIGVDDGIAMGHIGMRYSLPSREIIADAAETVINAHWFDGVFYIPNCDKITPGMILAAMRTNVPAIFCSGGPMKAGLSAHGKALTLSSMFEAVGAFKEGSISKEEFLDMEQNACPTCGSCAGMFTANSMNCLMEVLGLTLPYNGTALAVSDQRREMIRQAAFKLVENIKNDLKPRDIVTREAIDDAFALDMAMGGSTNTVLHTLAIANEAGIDYDLERINAIAKRTPYLSKIAPSSSYSMHDVHEAGGVPAIINELMKKDGTLHPDRITVTGKTLRENNEGKEIKNFDVIHPLDAPYDAQGGLSILFGNIAPKGAVIKVGGVDPSIKTFTGKAICFNSHDEAVEAIDNRTVRAGHVVVIRYEGPKGGPGMPEMLAPTSSIVGRGLGKDVALITDGRFSGATRGIAVGHISPEAASGGPIALIEDGDEITIDLTNRTLNVNQPEDVLARRRESLTPFKAKVKTGYLARYTALVTSANTGGVMQVPENLI</sequence>
<accession>A8Z4V6</accession>
<organism>
    <name type="scientific">Staphylococcus aureus (strain USA300 / TCH1516)</name>
    <dbReference type="NCBI Taxonomy" id="451516"/>
    <lineage>
        <taxon>Bacteria</taxon>
        <taxon>Bacillati</taxon>
        <taxon>Bacillota</taxon>
        <taxon>Bacilli</taxon>
        <taxon>Bacillales</taxon>
        <taxon>Staphylococcaceae</taxon>
        <taxon>Staphylococcus</taxon>
    </lineage>
</organism>